<accession>Q9PNH7</accession>
<accession>Q0P9D7</accession>
<gene>
    <name evidence="1" type="primary">prmA</name>
    <name type="ordered locus">Cj1117c</name>
</gene>
<evidence type="ECO:0000255" key="1">
    <source>
        <dbReference type="HAMAP-Rule" id="MF_00735"/>
    </source>
</evidence>
<keyword id="KW-0963">Cytoplasm</keyword>
<keyword id="KW-0489">Methyltransferase</keyword>
<keyword id="KW-1185">Reference proteome</keyword>
<keyword id="KW-0949">S-adenosyl-L-methionine</keyword>
<keyword id="KW-0808">Transferase</keyword>
<reference key="1">
    <citation type="journal article" date="2000" name="Nature">
        <title>The genome sequence of the food-borne pathogen Campylobacter jejuni reveals hypervariable sequences.</title>
        <authorList>
            <person name="Parkhill J."/>
            <person name="Wren B.W."/>
            <person name="Mungall K.L."/>
            <person name="Ketley J.M."/>
            <person name="Churcher C.M."/>
            <person name="Basham D."/>
            <person name="Chillingworth T."/>
            <person name="Davies R.M."/>
            <person name="Feltwell T."/>
            <person name="Holroyd S."/>
            <person name="Jagels K."/>
            <person name="Karlyshev A.V."/>
            <person name="Moule S."/>
            <person name="Pallen M.J."/>
            <person name="Penn C.W."/>
            <person name="Quail M.A."/>
            <person name="Rajandream M.A."/>
            <person name="Rutherford K.M."/>
            <person name="van Vliet A.H.M."/>
            <person name="Whitehead S."/>
            <person name="Barrell B.G."/>
        </authorList>
    </citation>
    <scope>NUCLEOTIDE SEQUENCE [LARGE SCALE GENOMIC DNA]</scope>
    <source>
        <strain>ATCC 700819 / NCTC 11168</strain>
    </source>
</reference>
<sequence length="281" mass="32323">MQKKYYELFFIVEEQYKNLFLDFAFDLGIEAIEEKDNGVYIRSHESLEEFSWALEIFAQKLTTTFNLNHKIISNLSLVEKENKDWIQEYKKGIKPILVDNVYIHTTWQEEKKNCINIKINPALAFGSGHHESTYSCVKFLQKFSKSKLRALDLGCGSGILGIIMAKFGCNVEICDTDELAIDSSLENARLNGVDFHKAWCGSIDKANGLYNLIVANIIADVILILEKDIKNHLEDNAILILSGILDKYSTRIKEKFQDLELIDEMQINEWCSFVYKNNKKG</sequence>
<dbReference type="EC" id="2.1.1.-" evidence="1"/>
<dbReference type="EMBL" id="AL111168">
    <property type="protein sequence ID" value="CAL35234.1"/>
    <property type="molecule type" value="Genomic_DNA"/>
</dbReference>
<dbReference type="PIR" id="H81315">
    <property type="entry name" value="H81315"/>
</dbReference>
<dbReference type="RefSeq" id="WP_002852657.1">
    <property type="nucleotide sequence ID" value="NZ_SZUC01000001.1"/>
</dbReference>
<dbReference type="RefSeq" id="YP_002344510.1">
    <property type="nucleotide sequence ID" value="NC_002163.1"/>
</dbReference>
<dbReference type="SMR" id="Q9PNH7"/>
<dbReference type="STRING" id="192222.Cj1117c"/>
<dbReference type="PaxDb" id="192222-Cj1117c"/>
<dbReference type="EnsemblBacteria" id="CAL35234">
    <property type="protein sequence ID" value="CAL35234"/>
    <property type="gene ID" value="Cj1117c"/>
</dbReference>
<dbReference type="GeneID" id="905408"/>
<dbReference type="KEGG" id="cje:Cj1117c"/>
<dbReference type="PATRIC" id="fig|192222.6.peg.1099"/>
<dbReference type="eggNOG" id="COG2264">
    <property type="taxonomic scope" value="Bacteria"/>
</dbReference>
<dbReference type="HOGENOM" id="CLU_049382_1_0_7"/>
<dbReference type="OrthoDB" id="9785995at2"/>
<dbReference type="Proteomes" id="UP000000799">
    <property type="component" value="Chromosome"/>
</dbReference>
<dbReference type="GO" id="GO:0005737">
    <property type="term" value="C:cytoplasm"/>
    <property type="evidence" value="ECO:0007669"/>
    <property type="project" value="UniProtKB-SubCell"/>
</dbReference>
<dbReference type="GO" id="GO:0016279">
    <property type="term" value="F:protein-lysine N-methyltransferase activity"/>
    <property type="evidence" value="ECO:0007669"/>
    <property type="project" value="RHEA"/>
</dbReference>
<dbReference type="GO" id="GO:0032259">
    <property type="term" value="P:methylation"/>
    <property type="evidence" value="ECO:0007669"/>
    <property type="project" value="UniProtKB-KW"/>
</dbReference>
<dbReference type="CDD" id="cd02440">
    <property type="entry name" value="AdoMet_MTases"/>
    <property type="match status" value="1"/>
</dbReference>
<dbReference type="Gene3D" id="3.40.50.150">
    <property type="entry name" value="Vaccinia Virus protein VP39"/>
    <property type="match status" value="1"/>
</dbReference>
<dbReference type="HAMAP" id="MF_00735">
    <property type="entry name" value="Methyltr_PrmA"/>
    <property type="match status" value="1"/>
</dbReference>
<dbReference type="InterPro" id="IPR050078">
    <property type="entry name" value="Ribosomal_L11_MeTrfase_PrmA"/>
</dbReference>
<dbReference type="InterPro" id="IPR004498">
    <property type="entry name" value="Ribosomal_PrmA_MeTrfase"/>
</dbReference>
<dbReference type="InterPro" id="IPR029063">
    <property type="entry name" value="SAM-dependent_MTases_sf"/>
</dbReference>
<dbReference type="NCBIfam" id="NF001786">
    <property type="entry name" value="PRK00517.2-4"/>
    <property type="match status" value="1"/>
</dbReference>
<dbReference type="PANTHER" id="PTHR43648">
    <property type="entry name" value="ELECTRON TRANSFER FLAVOPROTEIN BETA SUBUNIT LYSINE METHYLTRANSFERASE"/>
    <property type="match status" value="1"/>
</dbReference>
<dbReference type="PANTHER" id="PTHR43648:SF1">
    <property type="entry name" value="ELECTRON TRANSFER FLAVOPROTEIN BETA SUBUNIT LYSINE METHYLTRANSFERASE"/>
    <property type="match status" value="1"/>
</dbReference>
<dbReference type="Pfam" id="PF06325">
    <property type="entry name" value="PrmA"/>
    <property type="match status" value="1"/>
</dbReference>
<dbReference type="PIRSF" id="PIRSF000401">
    <property type="entry name" value="RPL11_MTase"/>
    <property type="match status" value="1"/>
</dbReference>
<dbReference type="SUPFAM" id="SSF53335">
    <property type="entry name" value="S-adenosyl-L-methionine-dependent methyltransferases"/>
    <property type="match status" value="1"/>
</dbReference>
<organism>
    <name type="scientific">Campylobacter jejuni subsp. jejuni serotype O:2 (strain ATCC 700819 / NCTC 11168)</name>
    <dbReference type="NCBI Taxonomy" id="192222"/>
    <lineage>
        <taxon>Bacteria</taxon>
        <taxon>Pseudomonadati</taxon>
        <taxon>Campylobacterota</taxon>
        <taxon>Epsilonproteobacteria</taxon>
        <taxon>Campylobacterales</taxon>
        <taxon>Campylobacteraceae</taxon>
        <taxon>Campylobacter</taxon>
    </lineage>
</organism>
<comment type="function">
    <text evidence="1">Methylates ribosomal protein L11.</text>
</comment>
<comment type="catalytic activity">
    <reaction evidence="1">
        <text>L-lysyl-[protein] + 3 S-adenosyl-L-methionine = N(6),N(6),N(6)-trimethyl-L-lysyl-[protein] + 3 S-adenosyl-L-homocysteine + 3 H(+)</text>
        <dbReference type="Rhea" id="RHEA:54192"/>
        <dbReference type="Rhea" id="RHEA-COMP:9752"/>
        <dbReference type="Rhea" id="RHEA-COMP:13826"/>
        <dbReference type="ChEBI" id="CHEBI:15378"/>
        <dbReference type="ChEBI" id="CHEBI:29969"/>
        <dbReference type="ChEBI" id="CHEBI:57856"/>
        <dbReference type="ChEBI" id="CHEBI:59789"/>
        <dbReference type="ChEBI" id="CHEBI:61961"/>
    </reaction>
</comment>
<comment type="subcellular location">
    <subcellularLocation>
        <location evidence="1">Cytoplasm</location>
    </subcellularLocation>
</comment>
<comment type="similarity">
    <text evidence="1">Belongs to the methyltransferase superfamily. PrmA family.</text>
</comment>
<protein>
    <recommendedName>
        <fullName evidence="1">Ribosomal protein L11 methyltransferase</fullName>
        <shortName evidence="1">L11 Mtase</shortName>
        <ecNumber evidence="1">2.1.1.-</ecNumber>
    </recommendedName>
</protein>
<proteinExistence type="inferred from homology"/>
<name>PRMA_CAMJE</name>
<feature type="chain" id="PRO_0000192248" description="Ribosomal protein L11 methyltransferase">
    <location>
        <begin position="1"/>
        <end position="281"/>
    </location>
</feature>
<feature type="binding site" evidence="1">
    <location>
        <position position="133"/>
    </location>
    <ligand>
        <name>S-adenosyl-L-methionine</name>
        <dbReference type="ChEBI" id="CHEBI:59789"/>
    </ligand>
</feature>
<feature type="binding site" evidence="1">
    <location>
        <position position="154"/>
    </location>
    <ligand>
        <name>S-adenosyl-L-methionine</name>
        <dbReference type="ChEBI" id="CHEBI:59789"/>
    </ligand>
</feature>
<feature type="binding site" evidence="1">
    <location>
        <position position="175"/>
    </location>
    <ligand>
        <name>S-adenosyl-L-methionine</name>
        <dbReference type="ChEBI" id="CHEBI:59789"/>
    </ligand>
</feature>
<feature type="binding site" evidence="1">
    <location>
        <position position="216"/>
    </location>
    <ligand>
        <name>S-adenosyl-L-methionine</name>
        <dbReference type="ChEBI" id="CHEBI:59789"/>
    </ligand>
</feature>